<dbReference type="EC" id="3.6.1.-" evidence="3 4"/>
<dbReference type="EMBL" id="U00096">
    <property type="protein sequence ID" value="AAC75520.1"/>
    <property type="molecule type" value="Genomic_DNA"/>
</dbReference>
<dbReference type="EMBL" id="AP009048">
    <property type="protein sequence ID" value="BAA16341.1"/>
    <property type="molecule type" value="Genomic_DNA"/>
</dbReference>
<dbReference type="EMBL" id="L34011">
    <property type="protein sequence ID" value="AAB46945.1"/>
    <property type="molecule type" value="Genomic_DNA"/>
</dbReference>
<dbReference type="PIR" id="B65022">
    <property type="entry name" value="B65022"/>
</dbReference>
<dbReference type="RefSeq" id="NP_416962.1">
    <property type="nucleotide sequence ID" value="NC_000913.3"/>
</dbReference>
<dbReference type="RefSeq" id="WP_001300814.1">
    <property type="nucleotide sequence ID" value="NZ_LN832404.1"/>
</dbReference>
<dbReference type="PDB" id="1VIU">
    <property type="method" value="X-ray"/>
    <property type="resolution" value="2.40 A"/>
    <property type="chains" value="A/B/C/D=2-191"/>
</dbReference>
<dbReference type="PDB" id="3O52">
    <property type="method" value="X-ray"/>
    <property type="resolution" value="2.50 A"/>
    <property type="chains" value="A/B/C/D/E=1-191"/>
</dbReference>
<dbReference type="PDB" id="3O61">
    <property type="method" value="X-ray"/>
    <property type="resolution" value="2.45 A"/>
    <property type="chains" value="A/B/C/D=1-191"/>
</dbReference>
<dbReference type="PDB" id="3O69">
    <property type="method" value="X-ray"/>
    <property type="resolution" value="2.10 A"/>
    <property type="chains" value="A/B=1-191"/>
</dbReference>
<dbReference type="PDB" id="3O6Z">
    <property type="method" value="X-ray"/>
    <property type="resolution" value="2.05 A"/>
    <property type="chains" value="A/B=1-191"/>
</dbReference>
<dbReference type="PDBsum" id="1VIU"/>
<dbReference type="PDBsum" id="3O52"/>
<dbReference type="PDBsum" id="3O61"/>
<dbReference type="PDBsum" id="3O69"/>
<dbReference type="PDBsum" id="3O6Z"/>
<dbReference type="SMR" id="P37128"/>
<dbReference type="BioGRID" id="4260924">
    <property type="interactions" value="54"/>
</dbReference>
<dbReference type="FunCoup" id="P37128">
    <property type="interactions" value="358"/>
</dbReference>
<dbReference type="IntAct" id="P37128">
    <property type="interactions" value="10"/>
</dbReference>
<dbReference type="STRING" id="511145.b2467"/>
<dbReference type="jPOST" id="P37128"/>
<dbReference type="PaxDb" id="511145-b2467"/>
<dbReference type="EnsemblBacteria" id="AAC75520">
    <property type="protein sequence ID" value="AAC75520"/>
    <property type="gene ID" value="b2467"/>
</dbReference>
<dbReference type="GeneID" id="947072"/>
<dbReference type="KEGG" id="ecj:JW2451"/>
<dbReference type="KEGG" id="eco:b2467"/>
<dbReference type="KEGG" id="ecoc:C3026_13685"/>
<dbReference type="PATRIC" id="fig|1411691.4.peg.4273"/>
<dbReference type="EchoBASE" id="EB2309"/>
<dbReference type="eggNOG" id="COG0494">
    <property type="taxonomic scope" value="Bacteria"/>
</dbReference>
<dbReference type="HOGENOM" id="CLU_062658_6_0_6"/>
<dbReference type="InParanoid" id="P37128"/>
<dbReference type="OMA" id="EQCIRNE"/>
<dbReference type="OrthoDB" id="5292471at2"/>
<dbReference type="PhylomeDB" id="P37128"/>
<dbReference type="BioCyc" id="EcoCyc:EG12410-MONOMER"/>
<dbReference type="BioCyc" id="MetaCyc:EG12410-MONOMER"/>
<dbReference type="EvolutionaryTrace" id="P37128"/>
<dbReference type="PRO" id="PR:P37128"/>
<dbReference type="Proteomes" id="UP000000625">
    <property type="component" value="Chromosome"/>
</dbReference>
<dbReference type="GO" id="GO:0005829">
    <property type="term" value="C:cytosol"/>
    <property type="evidence" value="ECO:0000318"/>
    <property type="project" value="GO_Central"/>
</dbReference>
<dbReference type="GO" id="GO:0052751">
    <property type="term" value="F:GDP-mannose hydrolase activity"/>
    <property type="evidence" value="ECO:0000314"/>
    <property type="project" value="EcoCyc"/>
</dbReference>
<dbReference type="GO" id="GO:0000287">
    <property type="term" value="F:magnesium ion binding"/>
    <property type="evidence" value="ECO:0000314"/>
    <property type="project" value="EcoCyc"/>
</dbReference>
<dbReference type="GO" id="GO:0042803">
    <property type="term" value="F:protein homodimerization activity"/>
    <property type="evidence" value="ECO:0000314"/>
    <property type="project" value="EcoCyc"/>
</dbReference>
<dbReference type="GO" id="GO:0006753">
    <property type="term" value="P:nucleoside phosphate metabolic process"/>
    <property type="evidence" value="ECO:0000318"/>
    <property type="project" value="GO_Central"/>
</dbReference>
<dbReference type="GO" id="GO:0019693">
    <property type="term" value="P:ribose phosphate metabolic process"/>
    <property type="evidence" value="ECO:0000318"/>
    <property type="project" value="GO_Central"/>
</dbReference>
<dbReference type="CDD" id="cd24157">
    <property type="entry name" value="NUDIX_GDPMK"/>
    <property type="match status" value="1"/>
</dbReference>
<dbReference type="FunFam" id="3.90.79.10:FF:000010">
    <property type="entry name" value="GDP-mannose pyrophosphatase NudK"/>
    <property type="match status" value="1"/>
</dbReference>
<dbReference type="Gene3D" id="3.90.79.10">
    <property type="entry name" value="Nucleoside Triphosphate Pyrophosphohydrolase"/>
    <property type="match status" value="1"/>
</dbReference>
<dbReference type="InterPro" id="IPR004385">
    <property type="entry name" value="NDP_pyrophosphatase"/>
</dbReference>
<dbReference type="InterPro" id="IPR015797">
    <property type="entry name" value="NUDIX_hydrolase-like_dom_sf"/>
</dbReference>
<dbReference type="InterPro" id="IPR000086">
    <property type="entry name" value="NUDIX_hydrolase_dom"/>
</dbReference>
<dbReference type="NCBIfam" id="TIGR00052">
    <property type="entry name" value="nudix-type nucleoside diphosphatase, YffH/AdpP family"/>
    <property type="match status" value="1"/>
</dbReference>
<dbReference type="NCBIfam" id="NF011585">
    <property type="entry name" value="PRK15009.1"/>
    <property type="match status" value="1"/>
</dbReference>
<dbReference type="PANTHER" id="PTHR11839:SF18">
    <property type="entry name" value="NUDIX HYDROLASE DOMAIN-CONTAINING PROTEIN"/>
    <property type="match status" value="1"/>
</dbReference>
<dbReference type="PANTHER" id="PTHR11839">
    <property type="entry name" value="UDP/ADP-SUGAR PYROPHOSPHATASE"/>
    <property type="match status" value="1"/>
</dbReference>
<dbReference type="Pfam" id="PF00293">
    <property type="entry name" value="NUDIX"/>
    <property type="match status" value="1"/>
</dbReference>
<dbReference type="SUPFAM" id="SSF55811">
    <property type="entry name" value="Nudix"/>
    <property type="match status" value="1"/>
</dbReference>
<dbReference type="PROSITE" id="PS51462">
    <property type="entry name" value="NUDIX"/>
    <property type="match status" value="1"/>
</dbReference>
<proteinExistence type="evidence at protein level"/>
<keyword id="KW-0002">3D-structure</keyword>
<keyword id="KW-0378">Hydrolase</keyword>
<keyword id="KW-0460">Magnesium</keyword>
<keyword id="KW-0479">Metal-binding</keyword>
<keyword id="KW-1185">Reference proteome</keyword>
<organism>
    <name type="scientific">Escherichia coli (strain K12)</name>
    <dbReference type="NCBI Taxonomy" id="83333"/>
    <lineage>
        <taxon>Bacteria</taxon>
        <taxon>Pseudomonadati</taxon>
        <taxon>Pseudomonadota</taxon>
        <taxon>Gammaproteobacteria</taxon>
        <taxon>Enterobacterales</taxon>
        <taxon>Enterobacteriaceae</taxon>
        <taxon>Escherichia</taxon>
    </lineage>
</organism>
<evidence type="ECO:0000255" key="1">
    <source>
        <dbReference type="PROSITE-ProRule" id="PRU00794"/>
    </source>
</evidence>
<evidence type="ECO:0000269" key="2">
    <source>
    </source>
</evidence>
<evidence type="ECO:0000269" key="3">
    <source>
    </source>
</evidence>
<evidence type="ECO:0000269" key="4">
    <source>
    </source>
</evidence>
<evidence type="ECO:0000303" key="5">
    <source>
    </source>
</evidence>
<evidence type="ECO:0000303" key="6">
    <source>
    </source>
</evidence>
<evidence type="ECO:0000305" key="7"/>
<evidence type="ECO:0007744" key="8">
    <source>
        <dbReference type="PDB" id="1VIU"/>
    </source>
</evidence>
<evidence type="ECO:0007744" key="9">
    <source>
        <dbReference type="PDB" id="3O52"/>
    </source>
</evidence>
<evidence type="ECO:0007744" key="10">
    <source>
        <dbReference type="PDB" id="3O61"/>
    </source>
</evidence>
<evidence type="ECO:0007744" key="11">
    <source>
        <dbReference type="PDB" id="3O69"/>
    </source>
</evidence>
<evidence type="ECO:0007744" key="12">
    <source>
        <dbReference type="PDB" id="3O6Z"/>
    </source>
</evidence>
<evidence type="ECO:0007829" key="13">
    <source>
        <dbReference type="PDB" id="1VIU"/>
    </source>
</evidence>
<evidence type="ECO:0007829" key="14">
    <source>
        <dbReference type="PDB" id="3O61"/>
    </source>
</evidence>
<evidence type="ECO:0007829" key="15">
    <source>
        <dbReference type="PDB" id="3O69"/>
    </source>
</evidence>
<evidence type="ECO:0007829" key="16">
    <source>
        <dbReference type="PDB" id="3O6Z"/>
    </source>
</evidence>
<sequence>MTQQITLIKDKILSDNYFTLHNITYDLTRKDGEVIRHKREVYDRGNGATILLYNTKKKTVVLIRQFRVATWVNGNESGQLIESCAGLLDNDEPEVCIRKEAIEETGYEVGEVRKLFELYMSPGGVTELIHFFIAEYSDNQRANAGGGVEDEDIEVLELPFSQALEMIKTGEIRDGKTVLLLNYLQTSHLMD</sequence>
<accession>P37128</accession>
<accession>P77255</accession>
<comment type="function">
    <text evidence="3 4">Nucleoside diphosphate sugar hydrolase that hydrolyzes GDP-mannose as its preferred substrate, yielding GMP and mannose-1-phosphate. Can also hydrolyze the pyrophosphate bond of other sugar nucleotides such as IDP-ribose, GDP-glucose, and to a lesser extent, ADP-ribose, ADP-glucose and UDP-glucose. Shows no activity toward Nudix substrates FAD, CDP-ethanolamine, CDP-choline, NAD(+), diadenosine pentaphosphate, GTP, UTP, ATP, or CTP.</text>
</comment>
<comment type="catalytic activity">
    <reaction evidence="3 4">
        <text>GDP-alpha-D-mannose + H2O = alpha-D-mannose 1-phosphate + GMP + 2 H(+)</text>
        <dbReference type="Rhea" id="RHEA:27978"/>
        <dbReference type="ChEBI" id="CHEBI:15377"/>
        <dbReference type="ChEBI" id="CHEBI:15378"/>
        <dbReference type="ChEBI" id="CHEBI:57527"/>
        <dbReference type="ChEBI" id="CHEBI:58115"/>
        <dbReference type="ChEBI" id="CHEBI:58409"/>
    </reaction>
</comment>
<comment type="catalytic activity">
    <reaction evidence="3 4">
        <text>GDP-alpha-D-glucose + H2O = alpha-D-glucose 1-phosphate + GMP + 2 H(+)</text>
        <dbReference type="Rhea" id="RHEA:62176"/>
        <dbReference type="ChEBI" id="CHEBI:15377"/>
        <dbReference type="ChEBI" id="CHEBI:15378"/>
        <dbReference type="ChEBI" id="CHEBI:58115"/>
        <dbReference type="ChEBI" id="CHEBI:58601"/>
        <dbReference type="ChEBI" id="CHEBI:62230"/>
    </reaction>
</comment>
<comment type="cofactor">
    <cofactor evidence="3 4">
        <name>Mg(2+)</name>
        <dbReference type="ChEBI" id="CHEBI:18420"/>
    </cofactor>
</comment>
<comment type="biophysicochemical properties">
    <kinetics>
        <KM evidence="4">659 uM for GDP-mannose (at pH 8.5 and 37 degrees Celsius)</KM>
        <KM evidence="3">810 uM for GDP-mannose (at pH 8.5 and 37 degrees Celsius)</KM>
        <Vmax evidence="3">207.0 umol/min/mg enzyme with GDP-mannose as substrate (at pH 8.5 and 37 degrees Celsius)</Vmax>
        <text evidence="3 4">kcat is 90.2 sec(-1) with GDP-mannose as substrate (at pH 8.5 and 37 degrees Celsius) (PubMed:21638333). The rate of hydrolysis of GDP-glucose is half the rate of GDP-mannose (PubMed:16766526, PubMed:21638333).</text>
    </kinetics>
    <phDependence>
        <text evidence="3 4">Optimum pH is about 8.5.</text>
    </phDependence>
</comment>
<comment type="subunit">
    <text evidence="2 4">Homodimer.</text>
</comment>
<comment type="domain">
    <text evidence="4">In the dimer, the N-terminal domains are swapped between the two monomers, such that residues of both chains contribute to the active site.</text>
</comment>
<comment type="disruption phenotype">
    <text evidence="4">Cells lacking this gene show no defect in their capacity of forming biofilms.</text>
</comment>
<comment type="similarity">
    <text evidence="7">Belongs to the Nudix hydrolase family. NudK subfamily.</text>
</comment>
<protein>
    <recommendedName>
        <fullName evidence="5">GDP-mannose pyrophosphatase</fullName>
        <ecNumber evidence="3 4">3.6.1.-</ecNumber>
    </recommendedName>
    <alternativeName>
        <fullName evidence="6">GDP-mannose hydrolase</fullName>
    </alternativeName>
    <alternativeName>
        <fullName evidence="6">GDPMK</fullName>
    </alternativeName>
</protein>
<gene>
    <name type="primary">nudK</name>
    <name evidence="5 6" type="synonym">yffH</name>
    <name type="ordered locus">b2467</name>
    <name type="ordered locus">JW2451</name>
</gene>
<name>NUDK_ECOLI</name>
<feature type="chain" id="PRO_0000169231" description="GDP-mannose pyrophosphatase">
    <location>
        <begin position="1"/>
        <end position="191"/>
    </location>
</feature>
<feature type="domain" description="Nudix hydrolase" evidence="1">
    <location>
        <begin position="43"/>
        <end position="180"/>
    </location>
</feature>
<feature type="short sequence motif" description="Nudix box" evidence="1">
    <location>
        <begin position="79"/>
        <end position="106"/>
    </location>
</feature>
<feature type="binding site" description="in other chain" evidence="4 10">
    <location>
        <position position="17"/>
    </location>
    <ligand>
        <name>GDP-alpha-D-mannose</name>
        <dbReference type="ChEBI" id="CHEBI:57527"/>
        <note>ligand shared between dimeric partners</note>
    </ligand>
</feature>
<feature type="binding site" evidence="4 10">
    <location>
        <begin position="38"/>
        <end position="40"/>
    </location>
    <ligand>
        <name>GDP-alpha-D-mannose</name>
        <dbReference type="ChEBI" id="CHEBI:57527"/>
        <note>ligand shared between dimeric partners</note>
    </ligand>
</feature>
<feature type="binding site" description="in other chain" evidence="4 10">
    <location>
        <position position="67"/>
    </location>
    <ligand>
        <name>GDP-alpha-D-mannose</name>
        <dbReference type="ChEBI" id="CHEBI:57527"/>
        <note>ligand shared between dimeric partners</note>
    </ligand>
</feature>
<feature type="binding site" description="in other chain" evidence="4 10">
    <location>
        <begin position="85"/>
        <end position="87"/>
    </location>
    <ligand>
        <name>GDP-alpha-D-mannose</name>
        <dbReference type="ChEBI" id="CHEBI:57527"/>
        <note>ligand shared between dimeric partners</note>
    </ligand>
</feature>
<feature type="binding site" evidence="4 12">
    <location>
        <position position="85"/>
    </location>
    <ligand>
        <name>Mg(2+)</name>
        <dbReference type="ChEBI" id="CHEBI:18420"/>
        <label>1</label>
    </ligand>
</feature>
<feature type="binding site" evidence="4 12">
    <location>
        <position position="100"/>
    </location>
    <ligand>
        <name>Mg(2+)</name>
        <dbReference type="ChEBI" id="CHEBI:18420"/>
        <label>2</label>
    </ligand>
</feature>
<feature type="binding site" description="in other chain" evidence="4 10">
    <location>
        <position position="104"/>
    </location>
    <ligand>
        <name>GDP-alpha-D-mannose</name>
        <dbReference type="ChEBI" id="CHEBI:57527"/>
        <note>ligand shared between dimeric partners</note>
    </ligand>
</feature>
<feature type="binding site" evidence="4 12">
    <location>
        <position position="104"/>
    </location>
    <ligand>
        <name>Mg(2+)</name>
        <dbReference type="ChEBI" id="CHEBI:18420"/>
        <label>1</label>
    </ligand>
</feature>
<feature type="binding site" evidence="4 12">
    <location>
        <position position="104"/>
    </location>
    <ligand>
        <name>Mg(2+)</name>
        <dbReference type="ChEBI" id="CHEBI:18420"/>
        <label>2</label>
    </ligand>
</feature>
<feature type="binding site" description="in other chain" evidence="4 10">
    <location>
        <position position="127"/>
    </location>
    <ligand>
        <name>GDP-alpha-D-mannose</name>
        <dbReference type="ChEBI" id="CHEBI:57527"/>
        <note>ligand shared between dimeric partners</note>
    </ligand>
</feature>
<feature type="binding site" description="in other chain" evidence="4 10">
    <location>
        <begin position="150"/>
        <end position="151"/>
    </location>
    <ligand>
        <name>GDP-alpha-D-mannose</name>
        <dbReference type="ChEBI" id="CHEBI:57527"/>
        <note>ligand shared between dimeric partners</note>
    </ligand>
</feature>
<feature type="binding site" evidence="4 12">
    <location>
        <position position="151"/>
    </location>
    <ligand>
        <name>Mg(2+)</name>
        <dbReference type="ChEBI" id="CHEBI:18420"/>
        <label>2</label>
    </ligand>
</feature>
<feature type="binding site" description="in other chain" evidence="4 10">
    <location>
        <position position="176"/>
    </location>
    <ligand>
        <name>GDP-alpha-D-mannose</name>
        <dbReference type="ChEBI" id="CHEBI:57527"/>
        <note>ligand shared between dimeric partners</note>
    </ligand>
</feature>
<feature type="mutagenesis site" description="Decreases catalytic activity rate by a factor of 53 and substrate affinity by at least 2-fold." evidence="4">
    <original>R</original>
    <variation>S</variation>
    <location>
        <position position="44"/>
    </location>
</feature>
<feature type="mutagenesis site" description="Abolishes Mg 2 binding. Abolishes catalytic activity." evidence="4">
    <original>E</original>
    <variation>A</variation>
    <location>
        <position position="100"/>
    </location>
</feature>
<feature type="mutagenesis site" description="Does not affect catalytic activity rate and substrate affinity." evidence="4">
    <original>E</original>
    <variation>A</variation>
    <location>
        <position position="149"/>
    </location>
</feature>
<feature type="mutagenesis site" description="Does not affect catalytic activity rate." evidence="4">
    <original>D</original>
    <variation>A</variation>
    <location>
        <position position="150"/>
    </location>
</feature>
<feature type="mutagenesis site" description="Decreases catalytic activity rate by a factor of 4, but does not affect substrate affinity." evidence="4">
    <original>E</original>
    <variation>A</variation>
    <location>
        <position position="151"/>
    </location>
</feature>
<feature type="mutagenesis site" description="Decreases catalytic activity rate by a factor of 2." evidence="4">
    <original>D</original>
    <variation>A</variation>
    <location>
        <position position="152"/>
    </location>
</feature>
<feature type="mutagenesis site" description="Decreases catalytic activity rate by a factor of 820 and substrate affinity by at least 2-fold." evidence="4">
    <original>K</original>
    <variation>A</variation>
    <location>
        <position position="176"/>
    </location>
</feature>
<feature type="strand" evidence="16">
    <location>
        <begin position="5"/>
        <end position="14"/>
    </location>
</feature>
<feature type="strand" evidence="16">
    <location>
        <begin position="16"/>
        <end position="28"/>
    </location>
</feature>
<feature type="strand" evidence="13">
    <location>
        <begin position="30"/>
        <end position="32"/>
    </location>
</feature>
<feature type="strand" evidence="16">
    <location>
        <begin position="34"/>
        <end position="43"/>
    </location>
</feature>
<feature type="strand" evidence="16">
    <location>
        <begin position="47"/>
        <end position="54"/>
    </location>
</feature>
<feature type="turn" evidence="16">
    <location>
        <begin position="55"/>
        <end position="58"/>
    </location>
</feature>
<feature type="strand" evidence="16">
    <location>
        <begin position="59"/>
        <end position="66"/>
    </location>
</feature>
<feature type="helix" evidence="16">
    <location>
        <begin position="68"/>
        <end position="71"/>
    </location>
</feature>
<feature type="turn" evidence="16">
    <location>
        <begin position="72"/>
        <end position="74"/>
    </location>
</feature>
<feature type="strand" evidence="16">
    <location>
        <begin position="79"/>
        <end position="82"/>
    </location>
</feature>
<feature type="strand" evidence="16">
    <location>
        <begin position="84"/>
        <end position="87"/>
    </location>
</feature>
<feature type="helix" evidence="16">
    <location>
        <begin position="93"/>
        <end position="104"/>
    </location>
</feature>
<feature type="strand" evidence="16">
    <location>
        <begin position="112"/>
        <end position="120"/>
    </location>
</feature>
<feature type="turn" evidence="16">
    <location>
        <begin position="122"/>
        <end position="124"/>
    </location>
</feature>
<feature type="strand" evidence="16">
    <location>
        <begin position="128"/>
        <end position="135"/>
    </location>
</feature>
<feature type="helix" evidence="14">
    <location>
        <begin position="138"/>
        <end position="140"/>
    </location>
</feature>
<feature type="strand" evidence="16">
    <location>
        <begin position="152"/>
        <end position="159"/>
    </location>
</feature>
<feature type="helix" evidence="16">
    <location>
        <begin position="160"/>
        <end position="169"/>
    </location>
</feature>
<feature type="helix" evidence="16">
    <location>
        <begin position="175"/>
        <end position="187"/>
    </location>
</feature>
<feature type="turn" evidence="15">
    <location>
        <begin position="188"/>
        <end position="190"/>
    </location>
</feature>
<reference key="1">
    <citation type="journal article" date="1997" name="DNA Res.">
        <title>Construction of a contiguous 874-kb sequence of the Escherichia coli-K12 genome corresponding to 50.0-68.8 min on the linkage map and analysis of its sequence features.</title>
        <authorList>
            <person name="Yamamoto Y."/>
            <person name="Aiba H."/>
            <person name="Baba T."/>
            <person name="Hayashi K."/>
            <person name="Inada T."/>
            <person name="Isono K."/>
            <person name="Itoh T."/>
            <person name="Kimura S."/>
            <person name="Kitagawa M."/>
            <person name="Makino K."/>
            <person name="Miki T."/>
            <person name="Mitsuhashi N."/>
            <person name="Mizobuchi K."/>
            <person name="Mori H."/>
            <person name="Nakade S."/>
            <person name="Nakamura Y."/>
            <person name="Nashimoto H."/>
            <person name="Oshima T."/>
            <person name="Oyama S."/>
            <person name="Saito N."/>
            <person name="Sampei G."/>
            <person name="Satoh Y."/>
            <person name="Sivasundaram S."/>
            <person name="Tagami H."/>
            <person name="Takahashi H."/>
            <person name="Takeda J."/>
            <person name="Takemoto K."/>
            <person name="Uehara K."/>
            <person name="Wada C."/>
            <person name="Yamagata S."/>
            <person name="Horiuchi T."/>
        </authorList>
    </citation>
    <scope>NUCLEOTIDE SEQUENCE [LARGE SCALE GENOMIC DNA]</scope>
    <source>
        <strain>K12 / W3110 / ATCC 27325 / DSM 5911</strain>
    </source>
</reference>
<reference key="2">
    <citation type="journal article" date="1997" name="Science">
        <title>The complete genome sequence of Escherichia coli K-12.</title>
        <authorList>
            <person name="Blattner F.R."/>
            <person name="Plunkett G. III"/>
            <person name="Bloch C.A."/>
            <person name="Perna N.T."/>
            <person name="Burland V."/>
            <person name="Riley M."/>
            <person name="Collado-Vides J."/>
            <person name="Glasner J.D."/>
            <person name="Rode C.K."/>
            <person name="Mayhew G.F."/>
            <person name="Gregor J."/>
            <person name="Davis N.W."/>
            <person name="Kirkpatrick H.A."/>
            <person name="Goeden M.A."/>
            <person name="Rose D.J."/>
            <person name="Mau B."/>
            <person name="Shao Y."/>
        </authorList>
    </citation>
    <scope>NUCLEOTIDE SEQUENCE [LARGE SCALE GENOMIC DNA]</scope>
    <source>
        <strain>K12 / MG1655 / ATCC 47076</strain>
    </source>
</reference>
<reference key="3">
    <citation type="journal article" date="2006" name="Mol. Syst. Biol.">
        <title>Highly accurate genome sequences of Escherichia coli K-12 strains MG1655 and W3110.</title>
        <authorList>
            <person name="Hayashi K."/>
            <person name="Morooka N."/>
            <person name="Yamamoto Y."/>
            <person name="Fujita K."/>
            <person name="Isono K."/>
            <person name="Choi S."/>
            <person name="Ohtsubo E."/>
            <person name="Baba T."/>
            <person name="Wanner B.L."/>
            <person name="Mori H."/>
            <person name="Horiuchi T."/>
        </authorList>
    </citation>
    <scope>NUCLEOTIDE SEQUENCE [LARGE SCALE GENOMIC DNA]</scope>
    <source>
        <strain>K12 / W3110 / ATCC 27325 / DSM 5911</strain>
    </source>
</reference>
<reference key="4">
    <citation type="submission" date="1994-06" db="EMBL/GenBank/DDBJ databases">
        <authorList>
            <person name="Cavicchioli R."/>
            <person name="Kolesnikow T."/>
            <person name="Gunsalus R.P."/>
        </authorList>
    </citation>
    <scope>NUCLEOTIDE SEQUENCE [GENOMIC DNA] OF 1-157</scope>
    <source>
        <strain>K12 / MC4100 / ATCC 35695 / DSM 6574</strain>
    </source>
</reference>
<reference key="5">
    <citation type="journal article" date="2006" name="J. Biol. Chem.">
        <title>Three new Nudix hydrolases from Escherichia coli.</title>
        <authorList>
            <person name="Xu W."/>
            <person name="Dunn C.A."/>
            <person name="O'Handley S.F."/>
            <person name="Smith D.L."/>
            <person name="Bessman M.J."/>
        </authorList>
    </citation>
    <scope>FUNCTION</scope>
    <scope>CATALYTIC ACTIVITY</scope>
    <scope>COFACTOR</scope>
    <scope>BIOPHYSICOCHEMICAL PROPERTIES</scope>
    <source>
        <strain>K12 / MG1655 / ATCC 47076</strain>
    </source>
</reference>
<reference evidence="8" key="6">
    <citation type="journal article" date="2005" name="Proteins">
        <title>Structural analysis of a set of proteins resulting from a bacterial genomics project.</title>
        <authorList>
            <person name="Badger J."/>
            <person name="Sauder J.M."/>
            <person name="Adams J.M."/>
            <person name="Antonysamy S."/>
            <person name="Bain K."/>
            <person name="Bergseid M.G."/>
            <person name="Buchanan S.G."/>
            <person name="Buchanan M.D."/>
            <person name="Batiyenko Y."/>
            <person name="Christopher J.A."/>
            <person name="Emtage S."/>
            <person name="Eroshkina A."/>
            <person name="Feil I."/>
            <person name="Furlong E.B."/>
            <person name="Gajiwala K.S."/>
            <person name="Gao X."/>
            <person name="He D."/>
            <person name="Hendle J."/>
            <person name="Huber A."/>
            <person name="Hoda K."/>
            <person name="Kearins P."/>
            <person name="Kissinger C."/>
            <person name="Laubert B."/>
            <person name="Lewis H.A."/>
            <person name="Lin J."/>
            <person name="Loomis K."/>
            <person name="Lorimer D."/>
            <person name="Louie G."/>
            <person name="Maletic M."/>
            <person name="Marsh C.D."/>
            <person name="Miller I."/>
            <person name="Molinari J."/>
            <person name="Muller-Dieckmann H.J."/>
            <person name="Newman J.M."/>
            <person name="Noland B.W."/>
            <person name="Pagarigan B."/>
            <person name="Park F."/>
            <person name="Peat T.S."/>
            <person name="Post K.W."/>
            <person name="Radojicic S."/>
            <person name="Ramos A."/>
            <person name="Romero R."/>
            <person name="Rutter M.E."/>
            <person name="Sanderson W.E."/>
            <person name="Schwinn K.D."/>
            <person name="Tresser J."/>
            <person name="Winhoven J."/>
            <person name="Wright T.A."/>
            <person name="Wu L."/>
            <person name="Xu J."/>
            <person name="Harris T.J.R."/>
        </authorList>
    </citation>
    <scope>X-RAY CRYSTALLOGRAPHY (2.4 ANGSTROMS) OF 2-191</scope>
    <scope>SUBUNIT</scope>
</reference>
<reference evidence="9 10 11 12" key="7">
    <citation type="journal article" date="2011" name="Proteins">
        <title>Structural studies of the Nudix GDP-mannose hydrolase from E. coli reveals a new motif for mannose recognition.</title>
        <authorList>
            <person name="Boto A.N."/>
            <person name="Xu W."/>
            <person name="Jakoncic J."/>
            <person name="Pannuri A."/>
            <person name="Romeo T."/>
            <person name="Bessman M.J."/>
            <person name="Gabelli S.B."/>
            <person name="Amzel L.M."/>
        </authorList>
    </citation>
    <scope>X-RAY CRYSTALLOGRAPHY (2.05 ANGSTROMS) OF WILD-TYPE AND MUTANTS ALA-100 AND ALA-152 IN COMPLEXES WITH GDP-ALPHA-D-MANNOSE AND MAGNESIUM</scope>
    <scope>FUNCTION</scope>
    <scope>CATALYTIC ACTIVITY</scope>
    <scope>BIOPHYSICOCHEMICAL PROPERTIES</scope>
    <scope>SUBSTRATE SPECIFICITY</scope>
    <scope>COFACTOR</scope>
    <scope>SUBUNIT</scope>
    <scope>DISRUPTION PHENOTYPE</scope>
    <scope>DOMAIN</scope>
    <scope>MUTAGENESIS OF ARG-44; GLU-100; GLU-149; ASP-150; GLU-151; ASP-152 AND LYS-176</scope>
    <source>
        <strain>K12 / MG1655 / ATCC 47076</strain>
    </source>
</reference>